<proteinExistence type="evidence at protein level"/>
<feature type="chain" id="PRO_0000304675" description="DENN domain-containing protein 1B">
    <location>
        <begin position="1"/>
        <end position="766"/>
    </location>
</feature>
<feature type="domain" description="uDENN" evidence="2">
    <location>
        <begin position="14"/>
        <end position="143"/>
    </location>
</feature>
<feature type="domain" description="cDENN" evidence="2">
    <location>
        <begin position="160"/>
        <end position="296"/>
    </location>
</feature>
<feature type="domain" description="dDENN" evidence="2">
    <location>
        <begin position="298"/>
        <end position="375"/>
    </location>
</feature>
<feature type="region of interest" description="Disordered" evidence="3">
    <location>
        <begin position="472"/>
        <end position="523"/>
    </location>
</feature>
<feature type="region of interest" description="Disordered" evidence="3">
    <location>
        <begin position="611"/>
        <end position="634"/>
    </location>
</feature>
<feature type="region of interest" description="Disordered" evidence="3">
    <location>
        <begin position="652"/>
        <end position="732"/>
    </location>
</feature>
<feature type="short sequence motif" description="FXDXF motif" evidence="4">
    <location>
        <begin position="378"/>
        <end position="382"/>
    </location>
</feature>
<feature type="short sequence motif" description="Clathrin box" evidence="4">
    <location>
        <begin position="547"/>
        <end position="556"/>
    </location>
</feature>
<feature type="compositionally biased region" description="Basic residues" evidence="3">
    <location>
        <begin position="480"/>
        <end position="492"/>
    </location>
</feature>
<feature type="compositionally biased region" description="Acidic residues" evidence="3">
    <location>
        <begin position="499"/>
        <end position="509"/>
    </location>
</feature>
<feature type="compositionally biased region" description="Polar residues" evidence="3">
    <location>
        <begin position="694"/>
        <end position="704"/>
    </location>
</feature>
<feature type="compositionally biased region" description="Basic and acidic residues" evidence="3">
    <location>
        <begin position="722"/>
        <end position="732"/>
    </location>
</feature>
<feature type="modified residue" description="Phosphotyrosine" evidence="8">
    <location>
        <position position="500"/>
    </location>
</feature>
<feature type="modified residue" description="Phosphoserine" evidence="8">
    <location>
        <position position="516"/>
    </location>
</feature>
<feature type="modified residue" description="Phosphoserine" evidence="8">
    <location>
        <position position="517"/>
    </location>
</feature>
<feature type="modified residue" description="Phosphoserine" evidence="8">
    <location>
        <position position="530"/>
    </location>
</feature>
<feature type="modified residue" description="Phosphoserine" evidence="8">
    <location>
        <position position="533"/>
    </location>
</feature>
<feature type="modified residue" description="Phosphoserine" evidence="8">
    <location>
        <position position="632"/>
    </location>
</feature>
<feature type="modified residue" description="Phosphoserine" evidence="8">
    <location>
        <position position="633"/>
    </location>
</feature>
<feature type="splice variant" id="VSP_058172" description="In isoform 4." evidence="6">
    <original>MDRRTRENPERTFDLVLKVKCHASENEDPEVLWKFPEDFGDQEVLQSVPKFCFPFDVERVSQNQVGQHFTFVLTDMESKQRFGFCRLTSGGRICLCILSYLPWFEVYYKLLNTLADYLAKELEEDLNETLKSLYNHPVPKANTPVNLSVHSCFITPDITGLPTIPESRNLTEYFVAVDVNNMLRLYASMLHERRIIITSSKLSTLTACLHGSAALLYPMYWQHIYIPVLPPHLLDYCCAPMPYLIGIHSSLIERVKNKSLEDVVVLNVDTNTLESPFNDLSSLPSDVVSALKNKLKKQSTATGDGVARAFLRAQAALFGSYRDALRYKPGEPITFCEESFVKHRSSVMKQFLETAVNLQLFKQ</original>
    <variation>MVLFISITCLYVFSSFSVRTSTCLIMFSCFSLRTCNSLAVFSCISLSDLLKSFLMSSTIIMRYAFKSRSRFSASLKLRAHLITMFAWSFLHRILPM</variation>
    <location>
        <begin position="1"/>
        <end position="363"/>
    </location>
</feature>
<feature type="splice variant" id="VSP_058173" description="In isoform 2." evidence="5 6">
    <location>
        <begin position="1"/>
        <end position="75"/>
    </location>
</feature>
<feature type="splice variant" id="VSP_058174" description="In isoform 1 and isoform 3.">
    <original>V</original>
    <variation>VNQELFIASEQVLKDDPSLIP</variation>
    <location>
        <position position="149"/>
    </location>
</feature>
<feature type="splice variant" id="VSP_058175" description="In isoform 3." evidence="5">
    <original>LTACLHGSAALLYPMYWQHIYIPVLPPHLLDYCCAPMPYLIGIHSSLIERVKNKSLEDVVVLNVDTNTLESPFNDLSSLPSDVVSALKNKLKKQSTATGDGVARAFLRAQAALFGSYRDALRYKPGEPITFCEESFVKHRSSVMKQFLETAVNLQLFKQFIDGRLAKLNAGRGFSDIFEEEITSGGFCGGSPRSYQQWVYTVKKGGALFNTAVTKATPAVRTAYKFAKSHARLGLKEVKSRLKHKDNEEEYGTCSGLVQYTPVYTLHNEKGENREKHKLSQTHLKRPHKSLDGTLYDDDDDDDDIERASKISSEDGEETRAYFYESDDSVEAQVKAPYSGEMDLLGEILDTLSTHSSDQGKLAPAKSLDFFRSMDDIDYKPTNKSNAPSENNLALLCASGDQGEWNLGQDDSALHGRQLPPSPRKRVSSGGLTESLFILKEESREKPLCADSVSGPTVVGKPAPTSGLRSQPAAPEASQTERGRAEVKQTPGQAPLQSEDLSVPGPGSRQSTFVPWEKAGKEDTKPSKDVGLLQEVVSLCHMSCDFQQDLNISEESRSGNQT</original>
    <variation>VSPSHLRL</variation>
    <location>
        <begin position="205"/>
        <end position="766"/>
    </location>
</feature>
<feature type="splice variant" id="VSP_058176" description="In isoform 1." evidence="5 6">
    <original>GSPRSYQQWVYTVKKGGALFNTAVTKATPAVRTAYKFAKSHARLGLKEVKSRLKHKDNEEEYGTCSGLVQYTPVYTLHNEKGENREKHKLSQTHLKRPHKSLDGTLYDDDDDDDDIERASKISSEDGEETRAYFYESDDSVEAQVKAPYSGEMDLLGEILDTLSTHSSDQGKLAPAKSLDFFRSMDDIDYKPTNKSNAPSENNLALLCASGDQGEWNLGQDDSALHGRQLPPSPRKRVSSGGLTESLFILKEESREKPLCADSVSGPTVVGKPAPTSGLRSQPAAPEASQTERGRAEVKQTPGQAPLQSEDLSVPGPGSRQSTFVPWEKAGKEDTKPSKDVGLLQEVVSLCHMSCDFQQDLNISEESRSGNQT</original>
    <variation>GKDSLESNYLDI</variation>
    <location>
        <begin position="394"/>
        <end position="766"/>
    </location>
</feature>
<feature type="mutagenesis site" description="Abolishes guanine nucleotide exchange factor (GEF) activity and impaired TCR down-modulation and recycling in TH2 cells." evidence="4">
    <original>G</original>
    <variation>D</variation>
    <location>
        <position position="246"/>
    </location>
</feature>
<feature type="mutagenesis site" description="Impaired interaction with the AP-2 complex and impaired TCR down-modulation and recycling in TH2 cells; when associated with 547-A--A-549." evidence="4">
    <original>K</original>
    <variation>A</variation>
    <location>
        <position position="482"/>
    </location>
</feature>
<feature type="mutagenesis site" description="Impaired interaction with the AP-2 complex and impaired TCR down-modulation and recycling in TH2 cells; when associated with A-482." evidence="4">
    <original>DLL</original>
    <variation>AAA</variation>
    <location>
        <begin position="547"/>
        <end position="549"/>
    </location>
</feature>
<dbReference type="EMBL" id="AK015524">
    <property type="protein sequence ID" value="BAB29881.1"/>
    <property type="molecule type" value="mRNA"/>
</dbReference>
<dbReference type="EMBL" id="AK155727">
    <property type="protein sequence ID" value="BAE33404.1"/>
    <property type="molecule type" value="mRNA"/>
</dbReference>
<dbReference type="EMBL" id="AC138741">
    <property type="status" value="NOT_ANNOTATED_CDS"/>
    <property type="molecule type" value="Genomic_DNA"/>
</dbReference>
<dbReference type="EMBL" id="AC117623">
    <property type="status" value="NOT_ANNOTATED_CDS"/>
    <property type="molecule type" value="Genomic_DNA"/>
</dbReference>
<dbReference type="EMBL" id="BC042698">
    <property type="protein sequence ID" value="AAH42698.1"/>
    <property type="molecule type" value="mRNA"/>
</dbReference>
<dbReference type="EMBL" id="BC141388">
    <property type="protein sequence ID" value="AAI41389.1"/>
    <property type="molecule type" value="mRNA"/>
</dbReference>
<dbReference type="EMBL" id="BC141389">
    <property type="protein sequence ID" value="AAI41390.1"/>
    <property type="molecule type" value="mRNA"/>
</dbReference>
<dbReference type="CCDS" id="CCDS35728.1">
    <molecule id="Q3U1T9-2"/>
</dbReference>
<dbReference type="CCDS" id="CCDS48384.1">
    <molecule id="Q3U1T9-1"/>
</dbReference>
<dbReference type="RefSeq" id="NP_001159973.1">
    <molecule id="Q3U1T9-1"/>
    <property type="nucleotide sequence ID" value="NM_001166501.1"/>
</dbReference>
<dbReference type="RefSeq" id="NP_851992.1">
    <molecule id="Q3U1T9-2"/>
    <property type="nucleotide sequence ID" value="NM_181347.3"/>
</dbReference>
<dbReference type="SMR" id="Q3U1T9"/>
<dbReference type="FunCoup" id="Q3U1T9">
    <property type="interactions" value="3518"/>
</dbReference>
<dbReference type="STRING" id="10090.ENSMUSP00000127580"/>
<dbReference type="GlyGen" id="Q3U1T9">
    <property type="glycosylation" value="1 site"/>
</dbReference>
<dbReference type="iPTMnet" id="Q3U1T9"/>
<dbReference type="PhosphoSitePlus" id="Q3U1T9"/>
<dbReference type="jPOST" id="Q3U1T9"/>
<dbReference type="PaxDb" id="10090-ENSMUSP00000092082"/>
<dbReference type="ProteomicsDB" id="279612">
    <molecule id="Q3U1T9-1"/>
</dbReference>
<dbReference type="ProteomicsDB" id="279613">
    <molecule id="Q3U1T9-2"/>
</dbReference>
<dbReference type="ProteomicsDB" id="279614">
    <molecule id="Q3U1T9-3"/>
</dbReference>
<dbReference type="ProteomicsDB" id="279615">
    <molecule id="Q3U1T9-4"/>
</dbReference>
<dbReference type="ProteomicsDB" id="279616">
    <molecule id="Q3U1T9-5"/>
</dbReference>
<dbReference type="Antibodypedia" id="34481">
    <property type="antibodies" value="152 antibodies from 20 providers"/>
</dbReference>
<dbReference type="DNASU" id="329260"/>
<dbReference type="Ensembl" id="ENSMUST00000094505.6">
    <molecule id="Q3U1T9-2"/>
    <property type="protein sequence ID" value="ENSMUSP00000092082.4"/>
    <property type="gene ID" value="ENSMUSG00000056268.16"/>
</dbReference>
<dbReference type="Ensembl" id="ENSMUST00000168527.8">
    <molecule id="Q3U1T9-1"/>
    <property type="protein sequence ID" value="ENSMUSP00000127580.2"/>
    <property type="gene ID" value="ENSMUSG00000056268.16"/>
</dbReference>
<dbReference type="Ensembl" id="ENSMUST00000200533.5">
    <molecule id="Q3U1T9-3"/>
    <property type="protein sequence ID" value="ENSMUSP00000142738.2"/>
    <property type="gene ID" value="ENSMUSG00000056268.16"/>
</dbReference>
<dbReference type="GeneID" id="329260"/>
<dbReference type="KEGG" id="mmu:329260"/>
<dbReference type="UCSC" id="uc007cvy.2">
    <molecule id="Q3U1T9-3"/>
    <property type="organism name" value="mouse"/>
</dbReference>
<dbReference type="UCSC" id="uc007cvz.2">
    <molecule id="Q3U1T9-2"/>
    <property type="organism name" value="mouse"/>
</dbReference>
<dbReference type="UCSC" id="uc007cwb.2">
    <property type="organism name" value="mouse"/>
</dbReference>
<dbReference type="UCSC" id="uc011wtc.1">
    <molecule id="Q3U1T9-4"/>
    <property type="organism name" value="mouse"/>
</dbReference>
<dbReference type="AGR" id="MGI:2447812"/>
<dbReference type="CTD" id="163486"/>
<dbReference type="MGI" id="MGI:2447812">
    <property type="gene designation" value="Dennd1b"/>
</dbReference>
<dbReference type="VEuPathDB" id="HostDB:ENSMUSG00000056268"/>
<dbReference type="eggNOG" id="KOG3569">
    <property type="taxonomic scope" value="Eukaryota"/>
</dbReference>
<dbReference type="GeneTree" id="ENSGT00940000155446"/>
<dbReference type="InParanoid" id="Q3U1T9"/>
<dbReference type="OMA" id="CKVCICI"/>
<dbReference type="OrthoDB" id="206724at2759"/>
<dbReference type="PhylomeDB" id="Q3U1T9"/>
<dbReference type="TreeFam" id="TF343037"/>
<dbReference type="Reactome" id="R-MMU-8876198">
    <property type="pathway name" value="RAB GEFs exchange GTP for GDP on RABs"/>
</dbReference>
<dbReference type="BioGRID-ORCS" id="329260">
    <property type="hits" value="3 hits in 74 CRISPR screens"/>
</dbReference>
<dbReference type="ChiTaRS" id="Dennd1b">
    <property type="organism name" value="mouse"/>
</dbReference>
<dbReference type="PRO" id="PR:Q3U1T9"/>
<dbReference type="Proteomes" id="UP000000589">
    <property type="component" value="Chromosome 1"/>
</dbReference>
<dbReference type="RNAct" id="Q3U1T9">
    <property type="molecule type" value="protein"/>
</dbReference>
<dbReference type="Bgee" id="ENSMUSG00000056268">
    <property type="expression patterns" value="Expressed in metanephric cortical collecting duct and 218 other cell types or tissues"/>
</dbReference>
<dbReference type="ExpressionAtlas" id="Q3U1T9">
    <property type="expression patterns" value="baseline and differential"/>
</dbReference>
<dbReference type="GO" id="GO:0030136">
    <property type="term" value="C:clathrin-coated vesicle"/>
    <property type="evidence" value="ECO:0007669"/>
    <property type="project" value="UniProtKB-SubCell"/>
</dbReference>
<dbReference type="GO" id="GO:0005829">
    <property type="term" value="C:cytosol"/>
    <property type="evidence" value="ECO:0007669"/>
    <property type="project" value="UniProtKB-SubCell"/>
</dbReference>
<dbReference type="GO" id="GO:0016607">
    <property type="term" value="C:nuclear speck"/>
    <property type="evidence" value="ECO:0007669"/>
    <property type="project" value="Ensembl"/>
</dbReference>
<dbReference type="GO" id="GO:0005085">
    <property type="term" value="F:guanyl-nucleotide exchange factor activity"/>
    <property type="evidence" value="ECO:0000315"/>
    <property type="project" value="UniProtKB"/>
</dbReference>
<dbReference type="GO" id="GO:0031267">
    <property type="term" value="F:small GTPase binding"/>
    <property type="evidence" value="ECO:0000353"/>
    <property type="project" value="UniProtKB"/>
</dbReference>
<dbReference type="GO" id="GO:0032456">
    <property type="term" value="P:endocytic recycling"/>
    <property type="evidence" value="ECO:0000315"/>
    <property type="project" value="UniProtKB"/>
</dbReference>
<dbReference type="GO" id="GO:0043547">
    <property type="term" value="P:positive regulation of GTPase activity"/>
    <property type="evidence" value="ECO:0000315"/>
    <property type="project" value="UniProtKB"/>
</dbReference>
<dbReference type="GO" id="GO:2000553">
    <property type="term" value="P:positive regulation of T-helper 2 cell cytokine production"/>
    <property type="evidence" value="ECO:0000315"/>
    <property type="project" value="UniProtKB"/>
</dbReference>
<dbReference type="GO" id="GO:0015031">
    <property type="term" value="P:protein transport"/>
    <property type="evidence" value="ECO:0007669"/>
    <property type="project" value="UniProtKB-KW"/>
</dbReference>
<dbReference type="GO" id="GO:0050776">
    <property type="term" value="P:regulation of immune response"/>
    <property type="evidence" value="ECO:0000315"/>
    <property type="project" value="UniProtKB"/>
</dbReference>
<dbReference type="GO" id="GO:0050852">
    <property type="term" value="P:T cell receptor signaling pathway"/>
    <property type="evidence" value="ECO:0000315"/>
    <property type="project" value="UniProtKB"/>
</dbReference>
<dbReference type="FunFam" id="3.30.450.200:FF:000003">
    <property type="entry name" value="DENN domain containing 1A"/>
    <property type="match status" value="1"/>
</dbReference>
<dbReference type="FunFam" id="3.40.50.11500:FF:000001">
    <property type="entry name" value="Putative DENN domain-containing protein 1A"/>
    <property type="match status" value="1"/>
</dbReference>
<dbReference type="Gene3D" id="3.30.450.200">
    <property type="match status" value="1"/>
</dbReference>
<dbReference type="Gene3D" id="3.40.50.11500">
    <property type="match status" value="1"/>
</dbReference>
<dbReference type="Gene3D" id="6.10.140.1000">
    <property type="match status" value="1"/>
</dbReference>
<dbReference type="InterPro" id="IPR001194">
    <property type="entry name" value="cDENN_dom"/>
</dbReference>
<dbReference type="InterPro" id="IPR005112">
    <property type="entry name" value="dDENN_dom"/>
</dbReference>
<dbReference type="InterPro" id="IPR043153">
    <property type="entry name" value="DENN_C"/>
</dbReference>
<dbReference type="InterPro" id="IPR040032">
    <property type="entry name" value="DENND1A/B/C"/>
</dbReference>
<dbReference type="InterPro" id="IPR037516">
    <property type="entry name" value="Tripartite_DENN"/>
</dbReference>
<dbReference type="InterPro" id="IPR005113">
    <property type="entry name" value="uDENN_dom"/>
</dbReference>
<dbReference type="PANTHER" id="PTHR13196">
    <property type="entry name" value="DENN DOMAIN-CONTAINING"/>
    <property type="match status" value="1"/>
</dbReference>
<dbReference type="PANTHER" id="PTHR13196:SF24">
    <property type="entry name" value="DENN DOMAIN-CONTAINING PROTEIN 1B"/>
    <property type="match status" value="1"/>
</dbReference>
<dbReference type="Pfam" id="PF03455">
    <property type="entry name" value="dDENN"/>
    <property type="match status" value="1"/>
</dbReference>
<dbReference type="Pfam" id="PF02141">
    <property type="entry name" value="DENN"/>
    <property type="match status" value="1"/>
</dbReference>
<dbReference type="Pfam" id="PF03456">
    <property type="entry name" value="uDENN"/>
    <property type="match status" value="1"/>
</dbReference>
<dbReference type="SMART" id="SM00801">
    <property type="entry name" value="dDENN"/>
    <property type="match status" value="1"/>
</dbReference>
<dbReference type="SMART" id="SM00799">
    <property type="entry name" value="DENN"/>
    <property type="match status" value="1"/>
</dbReference>
<dbReference type="SMART" id="SM00800">
    <property type="entry name" value="uDENN"/>
    <property type="match status" value="1"/>
</dbReference>
<dbReference type="PROSITE" id="PS50211">
    <property type="entry name" value="DENN"/>
    <property type="match status" value="1"/>
</dbReference>
<keyword id="KW-0025">Alternative splicing</keyword>
<keyword id="KW-0963">Cytoplasm</keyword>
<keyword id="KW-0968">Cytoplasmic vesicle</keyword>
<keyword id="KW-0344">Guanine-nucleotide releasing factor</keyword>
<keyword id="KW-0597">Phosphoprotein</keyword>
<keyword id="KW-0653">Protein transport</keyword>
<keyword id="KW-1185">Reference proteome</keyword>
<keyword id="KW-0813">Transport</keyword>
<name>DEN1B_MOUSE</name>
<organism>
    <name type="scientific">Mus musculus</name>
    <name type="common">Mouse</name>
    <dbReference type="NCBI Taxonomy" id="10090"/>
    <lineage>
        <taxon>Eukaryota</taxon>
        <taxon>Metazoa</taxon>
        <taxon>Chordata</taxon>
        <taxon>Craniata</taxon>
        <taxon>Vertebrata</taxon>
        <taxon>Euteleostomi</taxon>
        <taxon>Mammalia</taxon>
        <taxon>Eutheria</taxon>
        <taxon>Euarchontoglires</taxon>
        <taxon>Glires</taxon>
        <taxon>Rodentia</taxon>
        <taxon>Myomorpha</taxon>
        <taxon>Muroidea</taxon>
        <taxon>Muridae</taxon>
        <taxon>Murinae</taxon>
        <taxon>Mus</taxon>
        <taxon>Mus</taxon>
    </lineage>
</organism>
<reference key="1">
    <citation type="journal article" date="2005" name="Science">
        <title>The transcriptional landscape of the mammalian genome.</title>
        <authorList>
            <person name="Carninci P."/>
            <person name="Kasukawa T."/>
            <person name="Katayama S."/>
            <person name="Gough J."/>
            <person name="Frith M.C."/>
            <person name="Maeda N."/>
            <person name="Oyama R."/>
            <person name="Ravasi T."/>
            <person name="Lenhard B."/>
            <person name="Wells C."/>
            <person name="Kodzius R."/>
            <person name="Shimokawa K."/>
            <person name="Bajic V.B."/>
            <person name="Brenner S.E."/>
            <person name="Batalov S."/>
            <person name="Forrest A.R."/>
            <person name="Zavolan M."/>
            <person name="Davis M.J."/>
            <person name="Wilming L.G."/>
            <person name="Aidinis V."/>
            <person name="Allen J.E."/>
            <person name="Ambesi-Impiombato A."/>
            <person name="Apweiler R."/>
            <person name="Aturaliya R.N."/>
            <person name="Bailey T.L."/>
            <person name="Bansal M."/>
            <person name="Baxter L."/>
            <person name="Beisel K.W."/>
            <person name="Bersano T."/>
            <person name="Bono H."/>
            <person name="Chalk A.M."/>
            <person name="Chiu K.P."/>
            <person name="Choudhary V."/>
            <person name="Christoffels A."/>
            <person name="Clutterbuck D.R."/>
            <person name="Crowe M.L."/>
            <person name="Dalla E."/>
            <person name="Dalrymple B.P."/>
            <person name="de Bono B."/>
            <person name="Della Gatta G."/>
            <person name="di Bernardo D."/>
            <person name="Down T."/>
            <person name="Engstrom P."/>
            <person name="Fagiolini M."/>
            <person name="Faulkner G."/>
            <person name="Fletcher C.F."/>
            <person name="Fukushima T."/>
            <person name="Furuno M."/>
            <person name="Futaki S."/>
            <person name="Gariboldi M."/>
            <person name="Georgii-Hemming P."/>
            <person name="Gingeras T.R."/>
            <person name="Gojobori T."/>
            <person name="Green R.E."/>
            <person name="Gustincich S."/>
            <person name="Harbers M."/>
            <person name="Hayashi Y."/>
            <person name="Hensch T.K."/>
            <person name="Hirokawa N."/>
            <person name="Hill D."/>
            <person name="Huminiecki L."/>
            <person name="Iacono M."/>
            <person name="Ikeo K."/>
            <person name="Iwama A."/>
            <person name="Ishikawa T."/>
            <person name="Jakt M."/>
            <person name="Kanapin A."/>
            <person name="Katoh M."/>
            <person name="Kawasawa Y."/>
            <person name="Kelso J."/>
            <person name="Kitamura H."/>
            <person name="Kitano H."/>
            <person name="Kollias G."/>
            <person name="Krishnan S.P."/>
            <person name="Kruger A."/>
            <person name="Kummerfeld S.K."/>
            <person name="Kurochkin I.V."/>
            <person name="Lareau L.F."/>
            <person name="Lazarevic D."/>
            <person name="Lipovich L."/>
            <person name="Liu J."/>
            <person name="Liuni S."/>
            <person name="McWilliam S."/>
            <person name="Madan Babu M."/>
            <person name="Madera M."/>
            <person name="Marchionni L."/>
            <person name="Matsuda H."/>
            <person name="Matsuzawa S."/>
            <person name="Miki H."/>
            <person name="Mignone F."/>
            <person name="Miyake S."/>
            <person name="Morris K."/>
            <person name="Mottagui-Tabar S."/>
            <person name="Mulder N."/>
            <person name="Nakano N."/>
            <person name="Nakauchi H."/>
            <person name="Ng P."/>
            <person name="Nilsson R."/>
            <person name="Nishiguchi S."/>
            <person name="Nishikawa S."/>
            <person name="Nori F."/>
            <person name="Ohara O."/>
            <person name="Okazaki Y."/>
            <person name="Orlando V."/>
            <person name="Pang K.C."/>
            <person name="Pavan W.J."/>
            <person name="Pavesi G."/>
            <person name="Pesole G."/>
            <person name="Petrovsky N."/>
            <person name="Piazza S."/>
            <person name="Reed J."/>
            <person name="Reid J.F."/>
            <person name="Ring B.Z."/>
            <person name="Ringwald M."/>
            <person name="Rost B."/>
            <person name="Ruan Y."/>
            <person name="Salzberg S.L."/>
            <person name="Sandelin A."/>
            <person name="Schneider C."/>
            <person name="Schoenbach C."/>
            <person name="Sekiguchi K."/>
            <person name="Semple C.A."/>
            <person name="Seno S."/>
            <person name="Sessa L."/>
            <person name="Sheng Y."/>
            <person name="Shibata Y."/>
            <person name="Shimada H."/>
            <person name="Shimada K."/>
            <person name="Silva D."/>
            <person name="Sinclair B."/>
            <person name="Sperling S."/>
            <person name="Stupka E."/>
            <person name="Sugiura K."/>
            <person name="Sultana R."/>
            <person name="Takenaka Y."/>
            <person name="Taki K."/>
            <person name="Tammoja K."/>
            <person name="Tan S.L."/>
            <person name="Tang S."/>
            <person name="Taylor M.S."/>
            <person name="Tegner J."/>
            <person name="Teichmann S.A."/>
            <person name="Ueda H.R."/>
            <person name="van Nimwegen E."/>
            <person name="Verardo R."/>
            <person name="Wei C.L."/>
            <person name="Yagi K."/>
            <person name="Yamanishi H."/>
            <person name="Zabarovsky E."/>
            <person name="Zhu S."/>
            <person name="Zimmer A."/>
            <person name="Hide W."/>
            <person name="Bult C."/>
            <person name="Grimmond S.M."/>
            <person name="Teasdale R.D."/>
            <person name="Liu E.T."/>
            <person name="Brusic V."/>
            <person name="Quackenbush J."/>
            <person name="Wahlestedt C."/>
            <person name="Mattick J.S."/>
            <person name="Hume D.A."/>
            <person name="Kai C."/>
            <person name="Sasaki D."/>
            <person name="Tomaru Y."/>
            <person name="Fukuda S."/>
            <person name="Kanamori-Katayama M."/>
            <person name="Suzuki M."/>
            <person name="Aoki J."/>
            <person name="Arakawa T."/>
            <person name="Iida J."/>
            <person name="Imamura K."/>
            <person name="Itoh M."/>
            <person name="Kato T."/>
            <person name="Kawaji H."/>
            <person name="Kawagashira N."/>
            <person name="Kawashima T."/>
            <person name="Kojima M."/>
            <person name="Kondo S."/>
            <person name="Konno H."/>
            <person name="Nakano K."/>
            <person name="Ninomiya N."/>
            <person name="Nishio T."/>
            <person name="Okada M."/>
            <person name="Plessy C."/>
            <person name="Shibata K."/>
            <person name="Shiraki T."/>
            <person name="Suzuki S."/>
            <person name="Tagami M."/>
            <person name="Waki K."/>
            <person name="Watahiki A."/>
            <person name="Okamura-Oho Y."/>
            <person name="Suzuki H."/>
            <person name="Kawai J."/>
            <person name="Hayashizaki Y."/>
        </authorList>
    </citation>
    <scope>NUCLEOTIDE SEQUENCE [LARGE SCALE MRNA] (ISOFORMS 2 AND 4)</scope>
    <source>
        <strain>C57BL/6J</strain>
        <tissue>Testis</tissue>
    </source>
</reference>
<reference key="2">
    <citation type="journal article" date="2009" name="PLoS Biol.">
        <title>Lineage-specific biology revealed by a finished genome assembly of the mouse.</title>
        <authorList>
            <person name="Church D.M."/>
            <person name="Goodstadt L."/>
            <person name="Hillier L.W."/>
            <person name="Zody M.C."/>
            <person name="Goldstein S."/>
            <person name="She X."/>
            <person name="Bult C.J."/>
            <person name="Agarwala R."/>
            <person name="Cherry J.L."/>
            <person name="DiCuccio M."/>
            <person name="Hlavina W."/>
            <person name="Kapustin Y."/>
            <person name="Meric P."/>
            <person name="Maglott D."/>
            <person name="Birtle Z."/>
            <person name="Marques A.C."/>
            <person name="Graves T."/>
            <person name="Zhou S."/>
            <person name="Teague B."/>
            <person name="Potamousis K."/>
            <person name="Churas C."/>
            <person name="Place M."/>
            <person name="Herschleb J."/>
            <person name="Runnheim R."/>
            <person name="Forrest D."/>
            <person name="Amos-Landgraf J."/>
            <person name="Schwartz D.C."/>
            <person name="Cheng Z."/>
            <person name="Lindblad-Toh K."/>
            <person name="Eichler E.E."/>
            <person name="Ponting C.P."/>
        </authorList>
    </citation>
    <scope>NUCLEOTIDE SEQUENCE [LARGE SCALE GENOMIC DNA]</scope>
    <source>
        <strain>C57BL/6J</strain>
    </source>
</reference>
<reference key="3">
    <citation type="journal article" date="2004" name="Genome Res.">
        <title>The status, quality, and expansion of the NIH full-length cDNA project: the Mammalian Gene Collection (MGC).</title>
        <authorList>
            <consortium name="The MGC Project Team"/>
        </authorList>
    </citation>
    <scope>NUCLEOTIDE SEQUENCE [LARGE SCALE MRNA] (ISOFORMS 2 AND 3)</scope>
    <source>
        <strain>Czech II</strain>
        <tissue>Brain</tissue>
        <tissue>Mammary tumor</tissue>
    </source>
</reference>
<reference key="4">
    <citation type="journal article" date="2010" name="Cell">
        <title>A tissue-specific atlas of mouse protein phosphorylation and expression.</title>
        <authorList>
            <person name="Huttlin E.L."/>
            <person name="Jedrychowski M.P."/>
            <person name="Elias J.E."/>
            <person name="Goswami T."/>
            <person name="Rad R."/>
            <person name="Beausoleil S.A."/>
            <person name="Villen J."/>
            <person name="Haas W."/>
            <person name="Sowa M.E."/>
            <person name="Gygi S.P."/>
        </authorList>
    </citation>
    <scope>PHOSPHORYLATION [LARGE SCALE ANALYSIS] AT TYR-500; SER-516; SER-517; SER-530; SER-533; SER-632 AND SER-633</scope>
    <scope>IDENTIFICATION BY MASS SPECTROMETRY [LARGE SCALE ANALYSIS]</scope>
    <source>
        <tissue>Brain</tissue>
        <tissue>Heart</tissue>
        <tissue>Kidney</tissue>
        <tissue>Liver</tissue>
        <tissue>Lung</tissue>
        <tissue>Pancreas</tissue>
        <tissue>Spleen</tissue>
        <tissue>Testis</tissue>
    </source>
</reference>
<reference key="5">
    <citation type="journal article" date="2016" name="Cell">
        <title>Regulation of T cell receptor signaling by DENND1B in TH2 cells and allergic disease.</title>
        <authorList>
            <person name="Yang C.W."/>
            <person name="Hojer C.D."/>
            <person name="Zhou M."/>
            <person name="Wu X."/>
            <person name="Wuster A."/>
            <person name="Lee W.P."/>
            <person name="Yaspan B.L."/>
            <person name="Chan A.C."/>
        </authorList>
    </citation>
    <scope>FUNCTION</scope>
    <scope>TISSUE SPECIFICITY</scope>
    <scope>DISRUPTION PHENOTYPE</scope>
    <scope>INTERACTION WITH CD3E AND RAB35</scope>
    <scope>MUTAGENESIS OF GLY-246; LYS-482 AND 547-ASP--LEU-549</scope>
</reference>
<accession>Q3U1T9</accession>
<accession>B2RUR7</accession>
<accession>E9Q246</accession>
<accession>Q8CG96</accession>
<accession>Q9D5B9</accession>
<protein>
    <recommendedName>
        <fullName evidence="7">DENN domain-containing protein 1B</fullName>
    </recommendedName>
    <alternativeName>
        <fullName evidence="1">Connecdenn 2</fullName>
    </alternativeName>
</protein>
<evidence type="ECO:0000250" key="1">
    <source>
        <dbReference type="UniProtKB" id="Q6P3S1"/>
    </source>
</evidence>
<evidence type="ECO:0000255" key="2">
    <source>
        <dbReference type="PROSITE-ProRule" id="PRU00304"/>
    </source>
</evidence>
<evidence type="ECO:0000256" key="3">
    <source>
        <dbReference type="SAM" id="MobiDB-lite"/>
    </source>
</evidence>
<evidence type="ECO:0000269" key="4">
    <source>
    </source>
</evidence>
<evidence type="ECO:0000303" key="5">
    <source>
    </source>
</evidence>
<evidence type="ECO:0000303" key="6">
    <source>
    </source>
</evidence>
<evidence type="ECO:0000312" key="7">
    <source>
        <dbReference type="MGI" id="MGI:2447812"/>
    </source>
</evidence>
<evidence type="ECO:0007744" key="8">
    <source>
    </source>
</evidence>
<comment type="function">
    <text evidence="4">Guanine nucleotide exchange factor (GEF) for RAB35 that acts as a regulator of T-cell receptor (TCR) internalization in TH2 cells. Acts by promoting the exchange of GDP to GTP, converting inactive GDP-bound RAB35 into its active GTP-bound form. Plays a role in clathrin-mediated endocytosis. Controls cytokine production in TH2 lymphocytes by controlling the rate of TCR internalization and routing to endosomes: acts by mediating clathrin-mediated endocytosis of TCR via its interaction with the adapter protein complex 2 (AP-2) and GEF activity. Dysregulation leads to impaired TCR down-modulation and recycling, affecting cytokine production in TH2 cells.</text>
</comment>
<comment type="subunit">
    <text evidence="1 4">Interacts with RAB35 (PubMed:26774822). Interacts with clathrin heavy chain/CLTC (By similarity). Interacts with components of the adapter protein complex 2 (AP-2) AP2A2 and AP2B1 (By similarity). Interacts with CD3E (PubMed:26774822).</text>
</comment>
<comment type="subcellular location">
    <subcellularLocation>
        <location evidence="1">Cytoplasm</location>
        <location evidence="1">Cytosol</location>
    </subcellularLocation>
    <subcellularLocation>
        <location evidence="1">Cytoplasmic vesicle</location>
        <location evidence="1">Clathrin-coated vesicle</location>
    </subcellularLocation>
</comment>
<comment type="alternative products">
    <event type="alternative splicing"/>
    <isoform>
        <id>Q3U1T9-1</id>
        <name>5</name>
        <sequence type="displayed"/>
    </isoform>
    <isoform>
        <id>Q3U1T9-2</id>
        <name>2</name>
        <sequence type="described" ref="VSP_058173"/>
    </isoform>
    <isoform>
        <id>Q3U1T9-3</id>
        <name>3</name>
        <sequence type="described" ref="VSP_058174 VSP_058175"/>
    </isoform>
    <isoform>
        <id>Q3U1T9-4</id>
        <name>4</name>
        <sequence type="described" ref="VSP_058172"/>
    </isoform>
    <isoform>
        <id>Q3U1T9-5</id>
        <name>1</name>
        <sequence type="described" ref="VSP_058174 VSP_058176"/>
    </isoform>
</comment>
<comment type="tissue specificity">
    <text evidence="4">Expressed in a subset of dendritic cells (DCs).</text>
</comment>
<comment type="domain">
    <text evidence="4">The FXDXF motif mediates interaction the AP-2 complex.</text>
</comment>
<comment type="domain">
    <text evidence="4">The clathrin box motif mediates interaction with clathrin.</text>
</comment>
<comment type="PTM">
    <text evidence="1">Phosphorylated on serine and/or threonine, possibly regulating the guanine nucleotide exchange factor (GEF) activity.</text>
</comment>
<comment type="disruption phenotype">
    <text evidence="4">Mice are developmentally normal and fertile but accumulate more splenic and lymph node CD4(+) and CD8(+) effector/memory T-cells with age. TH2 cells display increased TCR-mediated responses, due to delayed surface TCR down-modulation and recycling, and increased production of cytokines. Mice have increased antigen-induced allergic responses.</text>
</comment>
<sequence>MDRRTRENPERTFDLVLKVKCHASENEDPEVLWKFPEDFGDQEVLQSVPKFCFPFDVERVSQNQVGQHFTFVLTDMESKQRFGFCRLTSGGRICLCILSYLPWFEVYYKLLNTLADYLAKELEEDLNETLKSLYNHPVPKANTPVNLSVHSCFITPDITGLPTIPESRNLTEYFVAVDVNNMLRLYASMLHERRIIITSSKLSTLTACLHGSAALLYPMYWQHIYIPVLPPHLLDYCCAPMPYLIGIHSSLIERVKNKSLEDVVVLNVDTNTLESPFNDLSSLPSDVVSALKNKLKKQSTATGDGVARAFLRAQAALFGSYRDALRYKPGEPITFCEESFVKHRSSVMKQFLETAVNLQLFKQFIDGRLAKLNAGRGFSDIFEEEITSGGFCGGSPRSYQQWVYTVKKGGALFNTAVTKATPAVRTAYKFAKSHARLGLKEVKSRLKHKDNEEEYGTCSGLVQYTPVYTLHNEKGENREKHKLSQTHLKRPHKSLDGTLYDDDDDDDDIERASKISSEDGEETRAYFYESDDSVEAQVKAPYSGEMDLLGEILDTLSTHSSDQGKLAPAKSLDFFRSMDDIDYKPTNKSNAPSENNLALLCASGDQGEWNLGQDDSALHGRQLPPSPRKRVSSGGLTESLFILKEESREKPLCADSVSGPTVVGKPAPTSGLRSQPAAPEASQTERGRAEVKQTPGQAPLQSEDLSVPGPGSRQSTFVPWEKAGKEDTKPSKDVGLLQEVVSLCHMSCDFQQDLNISEESRSGNQT</sequence>
<gene>
    <name evidence="7" type="primary">Dennd1b</name>
</gene>